<reference key="1">
    <citation type="journal article" date="2010" name="J. Bacteriol.">
        <title>Complete genome sequence of the aerobic facultative methanotroph Methylocella silvestris BL2.</title>
        <authorList>
            <person name="Chen Y."/>
            <person name="Crombie A."/>
            <person name="Rahman M.T."/>
            <person name="Dedysh S.N."/>
            <person name="Liesack W."/>
            <person name="Stott M.B."/>
            <person name="Alam M."/>
            <person name="Theisen A.R."/>
            <person name="Murrell J.C."/>
            <person name="Dunfield P.F."/>
        </authorList>
    </citation>
    <scope>NUCLEOTIDE SEQUENCE [LARGE SCALE GENOMIC DNA]</scope>
    <source>
        <strain>DSM 15510 / CIP 108128 / LMG 27833 / NCIMB 13906 / BL2</strain>
    </source>
</reference>
<dbReference type="EMBL" id="CP001280">
    <property type="protein sequence ID" value="ACK52749.1"/>
    <property type="molecule type" value="Genomic_DNA"/>
</dbReference>
<dbReference type="RefSeq" id="WP_012592817.1">
    <property type="nucleotide sequence ID" value="NC_011666.1"/>
</dbReference>
<dbReference type="SMR" id="B8EMS0"/>
<dbReference type="STRING" id="395965.Msil_3867"/>
<dbReference type="KEGG" id="msl:Msil_3867"/>
<dbReference type="eggNOG" id="COG0222">
    <property type="taxonomic scope" value="Bacteria"/>
</dbReference>
<dbReference type="HOGENOM" id="CLU_086499_3_0_5"/>
<dbReference type="OrthoDB" id="9811748at2"/>
<dbReference type="Proteomes" id="UP000002257">
    <property type="component" value="Chromosome"/>
</dbReference>
<dbReference type="GO" id="GO:0022625">
    <property type="term" value="C:cytosolic large ribosomal subunit"/>
    <property type="evidence" value="ECO:0007669"/>
    <property type="project" value="TreeGrafter"/>
</dbReference>
<dbReference type="GO" id="GO:0003729">
    <property type="term" value="F:mRNA binding"/>
    <property type="evidence" value="ECO:0007669"/>
    <property type="project" value="TreeGrafter"/>
</dbReference>
<dbReference type="GO" id="GO:0003735">
    <property type="term" value="F:structural constituent of ribosome"/>
    <property type="evidence" value="ECO:0007669"/>
    <property type="project" value="InterPro"/>
</dbReference>
<dbReference type="GO" id="GO:0006412">
    <property type="term" value="P:translation"/>
    <property type="evidence" value="ECO:0007669"/>
    <property type="project" value="UniProtKB-UniRule"/>
</dbReference>
<dbReference type="CDD" id="cd00387">
    <property type="entry name" value="Ribosomal_L7_L12"/>
    <property type="match status" value="1"/>
</dbReference>
<dbReference type="FunFam" id="1.20.5.710:FF:000007">
    <property type="entry name" value="50S ribosomal protein L7/L12"/>
    <property type="match status" value="1"/>
</dbReference>
<dbReference type="FunFam" id="3.30.1390.10:FF:000001">
    <property type="entry name" value="50S ribosomal protein L7/L12"/>
    <property type="match status" value="1"/>
</dbReference>
<dbReference type="Gene3D" id="3.30.1390.10">
    <property type="match status" value="1"/>
</dbReference>
<dbReference type="Gene3D" id="1.20.5.710">
    <property type="entry name" value="Single helix bin"/>
    <property type="match status" value="1"/>
</dbReference>
<dbReference type="HAMAP" id="MF_00368">
    <property type="entry name" value="Ribosomal_bL12"/>
    <property type="match status" value="1"/>
</dbReference>
<dbReference type="InterPro" id="IPR000206">
    <property type="entry name" value="Ribosomal_bL12"/>
</dbReference>
<dbReference type="InterPro" id="IPR013823">
    <property type="entry name" value="Ribosomal_bL12_C"/>
</dbReference>
<dbReference type="InterPro" id="IPR014719">
    <property type="entry name" value="Ribosomal_bL12_C/ClpS-like"/>
</dbReference>
<dbReference type="InterPro" id="IPR008932">
    <property type="entry name" value="Ribosomal_bL12_oligo"/>
</dbReference>
<dbReference type="InterPro" id="IPR036235">
    <property type="entry name" value="Ribosomal_bL12_oligo_N_sf"/>
</dbReference>
<dbReference type="NCBIfam" id="TIGR00855">
    <property type="entry name" value="L12"/>
    <property type="match status" value="1"/>
</dbReference>
<dbReference type="PANTHER" id="PTHR45987">
    <property type="entry name" value="39S RIBOSOMAL PROTEIN L12"/>
    <property type="match status" value="1"/>
</dbReference>
<dbReference type="PANTHER" id="PTHR45987:SF4">
    <property type="entry name" value="LARGE RIBOSOMAL SUBUNIT PROTEIN BL12M"/>
    <property type="match status" value="1"/>
</dbReference>
<dbReference type="Pfam" id="PF00542">
    <property type="entry name" value="Ribosomal_L12"/>
    <property type="match status" value="1"/>
</dbReference>
<dbReference type="Pfam" id="PF16320">
    <property type="entry name" value="Ribosomal_L12_N"/>
    <property type="match status" value="1"/>
</dbReference>
<dbReference type="SUPFAM" id="SSF54736">
    <property type="entry name" value="ClpS-like"/>
    <property type="match status" value="1"/>
</dbReference>
<dbReference type="SUPFAM" id="SSF48300">
    <property type="entry name" value="Ribosomal protein L7/12, oligomerisation (N-terminal) domain"/>
    <property type="match status" value="1"/>
</dbReference>
<feature type="chain" id="PRO_1000195808" description="Large ribosomal subunit protein bL12">
    <location>
        <begin position="1"/>
        <end position="126"/>
    </location>
</feature>
<protein>
    <recommendedName>
        <fullName evidence="1">Large ribosomal subunit protein bL12</fullName>
    </recommendedName>
    <alternativeName>
        <fullName evidence="2">50S ribosomal protein L7/L12</fullName>
    </alternativeName>
</protein>
<keyword id="KW-1185">Reference proteome</keyword>
<keyword id="KW-0687">Ribonucleoprotein</keyword>
<keyword id="KW-0689">Ribosomal protein</keyword>
<evidence type="ECO:0000255" key="1">
    <source>
        <dbReference type="HAMAP-Rule" id="MF_00368"/>
    </source>
</evidence>
<evidence type="ECO:0000305" key="2"/>
<comment type="function">
    <text evidence="1">Forms part of the ribosomal stalk which helps the ribosome interact with GTP-bound translation factors. Is thus essential for accurate translation.</text>
</comment>
<comment type="subunit">
    <text evidence="1">Homodimer. Part of the ribosomal stalk of the 50S ribosomal subunit. Forms a multimeric L10(L12)X complex, where L10 forms an elongated spine to which 2 to 4 L12 dimers bind in a sequential fashion. Binds GTP-bound translation factors.</text>
</comment>
<comment type="similarity">
    <text evidence="1">Belongs to the bacterial ribosomal protein bL12 family.</text>
</comment>
<proteinExistence type="inferred from homology"/>
<gene>
    <name evidence="1" type="primary">rplL</name>
    <name type="ordered locus">Msil_3867</name>
</gene>
<accession>B8EMS0</accession>
<organism>
    <name type="scientific">Methylocella silvestris (strain DSM 15510 / CIP 108128 / LMG 27833 / NCIMB 13906 / BL2)</name>
    <dbReference type="NCBI Taxonomy" id="395965"/>
    <lineage>
        <taxon>Bacteria</taxon>
        <taxon>Pseudomonadati</taxon>
        <taxon>Pseudomonadota</taxon>
        <taxon>Alphaproteobacteria</taxon>
        <taxon>Hyphomicrobiales</taxon>
        <taxon>Beijerinckiaceae</taxon>
        <taxon>Methylocella</taxon>
    </lineage>
</organism>
<sequence>MANLEKIVEDLSTLTVLEAAELAKLLEEKWGVSAAAAVAVAAGPAAGAAAAAPAEEQTEFTVVLAAFGDKKIEVIKEVRAVTGLGLKEAKDLVEAAPKPVKEGVTKEEAEKIKAALEKAGAKVELK</sequence>
<name>RL7_METSB</name>